<name>RNZ2_ARATH</name>
<sequence length="354" mass="39951">MQLSSSFPISPPKIFPSTKHHKPPVITHQLAAQIQSNRRHFVSPVKVSGYFSSISRAIEEEEEYRKARAAVNRKGVELESYAIEGISVGGHETCVIVPELKCVFDIGRCPSRAIQQKFLFITHAHLDHIGGLPMYVASRGLYNLEPPKIFVPPSIKEDVEKLLEIHRTMGQVELNVELIPLAVGETYELRNDIVVRPFATHHVIPSQGYVIYSVRKKLQKQYAHLKGKQIEKIKKSGVEITDTILSPEIAFTGDTTSEYMLDPRNADALRAKVLITEATFLDESFSTEHAQALGHTHISQIIENAKWIRSKTVLLTHFSSRYHVEEIREAVLKLQSKVSAKVIPLTEGFRSRYS</sequence>
<dbReference type="EC" id="3.1.26.11" evidence="4"/>
<dbReference type="EMBL" id="AJ428988">
    <property type="protein sequence ID" value="CAD22099.1"/>
    <property type="molecule type" value="mRNA"/>
</dbReference>
<dbReference type="EMBL" id="AC006951">
    <property type="protein sequence ID" value="AAD25827.1"/>
    <property type="status" value="ALT_SEQ"/>
    <property type="molecule type" value="Genomic_DNA"/>
</dbReference>
<dbReference type="EMBL" id="CP002685">
    <property type="protein sequence ID" value="AEC05843.1"/>
    <property type="molecule type" value="Genomic_DNA"/>
</dbReference>
<dbReference type="EMBL" id="AY099564">
    <property type="protein sequence ID" value="AAM20416.1"/>
    <property type="molecule type" value="mRNA"/>
</dbReference>
<dbReference type="EMBL" id="BT001247">
    <property type="protein sequence ID" value="AAN65134.1"/>
    <property type="molecule type" value="mRNA"/>
</dbReference>
<dbReference type="PIR" id="E84458">
    <property type="entry name" value="E84458"/>
</dbReference>
<dbReference type="RefSeq" id="NP_178532.2">
    <property type="nucleotide sequence ID" value="NM_126484.5"/>
</dbReference>
<dbReference type="SMR" id="Q8L633"/>
<dbReference type="FunCoup" id="Q8L633">
    <property type="interactions" value="1111"/>
</dbReference>
<dbReference type="STRING" id="3702.Q8L633"/>
<dbReference type="PaxDb" id="3702-AT2G04530.1"/>
<dbReference type="ProteomicsDB" id="228214"/>
<dbReference type="EnsemblPlants" id="AT2G04530.1">
    <property type="protein sequence ID" value="AT2G04530.1"/>
    <property type="gene ID" value="AT2G04530"/>
</dbReference>
<dbReference type="GeneID" id="814995"/>
<dbReference type="Gramene" id="AT2G04530.1">
    <property type="protein sequence ID" value="AT2G04530.1"/>
    <property type="gene ID" value="AT2G04530"/>
</dbReference>
<dbReference type="KEGG" id="ath:AT2G04530"/>
<dbReference type="Araport" id="AT2G04530"/>
<dbReference type="TAIR" id="AT2G04530">
    <property type="gene designation" value="CPZ"/>
</dbReference>
<dbReference type="eggNOG" id="ENOG502S564">
    <property type="taxonomic scope" value="Eukaryota"/>
</dbReference>
<dbReference type="HOGENOM" id="CLU_054121_0_0_1"/>
<dbReference type="InParanoid" id="Q8L633"/>
<dbReference type="OMA" id="VVFVPPC"/>
<dbReference type="PhylomeDB" id="Q8L633"/>
<dbReference type="BRENDA" id="3.1.26.11">
    <property type="organism ID" value="399"/>
</dbReference>
<dbReference type="PRO" id="PR:Q8L633"/>
<dbReference type="Proteomes" id="UP000006548">
    <property type="component" value="Chromosome 2"/>
</dbReference>
<dbReference type="ExpressionAtlas" id="Q8L633">
    <property type="expression patterns" value="baseline and differential"/>
</dbReference>
<dbReference type="GO" id="GO:0009507">
    <property type="term" value="C:chloroplast"/>
    <property type="evidence" value="ECO:0000250"/>
    <property type="project" value="TAIR"/>
</dbReference>
<dbReference type="GO" id="GO:0042781">
    <property type="term" value="F:3'-tRNA processing endoribonuclease activity"/>
    <property type="evidence" value="ECO:0000314"/>
    <property type="project" value="TAIR"/>
</dbReference>
<dbReference type="GO" id="GO:0046872">
    <property type="term" value="F:metal ion binding"/>
    <property type="evidence" value="ECO:0007669"/>
    <property type="project" value="UniProtKB-KW"/>
</dbReference>
<dbReference type="GO" id="GO:0042780">
    <property type="term" value="P:tRNA 3'-end processing"/>
    <property type="evidence" value="ECO:0000314"/>
    <property type="project" value="TAIR"/>
</dbReference>
<dbReference type="GO" id="GO:0008033">
    <property type="term" value="P:tRNA processing"/>
    <property type="evidence" value="ECO:0000304"/>
    <property type="project" value="TAIR"/>
</dbReference>
<dbReference type="CDD" id="cd16272">
    <property type="entry name" value="RNaseZ_MBL-fold"/>
    <property type="match status" value="1"/>
</dbReference>
<dbReference type="FunFam" id="3.60.15.10:FF:000049">
    <property type="entry name" value="tRNase Z TRZ1"/>
    <property type="match status" value="1"/>
</dbReference>
<dbReference type="Gene3D" id="3.60.15.10">
    <property type="entry name" value="Ribonuclease Z/Hydroxyacylglutathione hydrolase-like"/>
    <property type="match status" value="1"/>
</dbReference>
<dbReference type="InterPro" id="IPR001279">
    <property type="entry name" value="Metallo-B-lactamas"/>
</dbReference>
<dbReference type="InterPro" id="IPR036866">
    <property type="entry name" value="RibonucZ/Hydroxyglut_hydro"/>
</dbReference>
<dbReference type="PANTHER" id="PTHR46504">
    <property type="entry name" value="TRNASE Z TRZ1"/>
    <property type="match status" value="1"/>
</dbReference>
<dbReference type="PANTHER" id="PTHR46504:SF1">
    <property type="entry name" value="TRNASE Z TRZ2, CHLOROPLASTIC"/>
    <property type="match status" value="1"/>
</dbReference>
<dbReference type="Pfam" id="PF12706">
    <property type="entry name" value="Lactamase_B_2"/>
    <property type="match status" value="1"/>
</dbReference>
<dbReference type="SUPFAM" id="SSF56281">
    <property type="entry name" value="Metallo-hydrolase/oxidoreductase"/>
    <property type="match status" value="1"/>
</dbReference>
<comment type="function">
    <text evidence="4 5">Zinc phosphodiesterase, which displays tRNA 3'-processing endonuclease activity. Involved in tRNA maturation, by removing a 3'-trailer from precursor tRNA.</text>
</comment>
<comment type="catalytic activity">
    <reaction evidence="4">
        <text>Endonucleolytic cleavage of RNA, removing extra 3' nucleotides from tRNA precursor, generating 3' termini of tRNAs. A 3'-hydroxy group is left at the tRNA terminus and a 5'-phosphoryl group is left at the trailer molecule.</text>
        <dbReference type="EC" id="3.1.26.11"/>
    </reaction>
</comment>
<comment type="cofactor">
    <cofactor evidence="1">
        <name>Zn(2+)</name>
        <dbReference type="ChEBI" id="CHEBI:29105"/>
    </cofactor>
    <cofactor evidence="1">
        <name>Ca(2+)</name>
        <dbReference type="ChEBI" id="CHEBI:29108"/>
    </cofactor>
    <cofactor evidence="1">
        <name>Mn(2+)</name>
        <dbReference type="ChEBI" id="CHEBI:29035"/>
    </cofactor>
    <cofactor evidence="1">
        <name>Mg(2+)</name>
        <dbReference type="ChEBI" id="CHEBI:18420"/>
    </cofactor>
</comment>
<comment type="subunit">
    <text evidence="1">Homodimer.</text>
</comment>
<comment type="subcellular location">
    <subcellularLocation>
        <location evidence="5">Plastid</location>
        <location evidence="5">Chloroplast</location>
    </subcellularLocation>
</comment>
<comment type="tissue specificity">
    <text evidence="9">Highly expressed in green and actively dividing tissues.</text>
</comment>
<comment type="disruption phenotype">
    <text evidence="5">Embryonic lethality when homozygous.</text>
</comment>
<comment type="similarity">
    <text evidence="8">Belongs to the RNase Z family.</text>
</comment>
<comment type="sequence caution" evidence="8">
    <conflict type="erroneous gene model prediction">
        <sequence resource="EMBL-CDS" id="AAD25827"/>
    </conflict>
</comment>
<keyword id="KW-0106">Calcium</keyword>
<keyword id="KW-0150">Chloroplast</keyword>
<keyword id="KW-0255">Endonuclease</keyword>
<keyword id="KW-0378">Hydrolase</keyword>
<keyword id="KW-0460">Magnesium</keyword>
<keyword id="KW-0464">Manganese</keyword>
<keyword id="KW-0479">Metal-binding</keyword>
<keyword id="KW-0540">Nuclease</keyword>
<keyword id="KW-0934">Plastid</keyword>
<keyword id="KW-1185">Reference proteome</keyword>
<keyword id="KW-0809">Transit peptide</keyword>
<keyword id="KW-0819">tRNA processing</keyword>
<keyword id="KW-0862">Zinc</keyword>
<accession>Q8L633</accession>
<accession>Q8LGU8</accession>
<accession>Q9SJB8</accession>
<organism>
    <name type="scientific">Arabidopsis thaliana</name>
    <name type="common">Mouse-ear cress</name>
    <dbReference type="NCBI Taxonomy" id="3702"/>
    <lineage>
        <taxon>Eukaryota</taxon>
        <taxon>Viridiplantae</taxon>
        <taxon>Streptophyta</taxon>
        <taxon>Embryophyta</taxon>
        <taxon>Tracheophyta</taxon>
        <taxon>Spermatophyta</taxon>
        <taxon>Magnoliopsida</taxon>
        <taxon>eudicotyledons</taxon>
        <taxon>Gunneridae</taxon>
        <taxon>Pentapetalae</taxon>
        <taxon>rosids</taxon>
        <taxon>malvids</taxon>
        <taxon>Brassicales</taxon>
        <taxon>Brassicaceae</taxon>
        <taxon>Camelineae</taxon>
        <taxon>Arabidopsis</taxon>
    </lineage>
</organism>
<evidence type="ECO:0000250" key="1">
    <source>
        <dbReference type="UniProtKB" id="Q8LGU7"/>
    </source>
</evidence>
<evidence type="ECO:0000255" key="2"/>
<evidence type="ECO:0000256" key="3">
    <source>
        <dbReference type="SAM" id="MobiDB-lite"/>
    </source>
</evidence>
<evidence type="ECO:0000269" key="4">
    <source>
    </source>
</evidence>
<evidence type="ECO:0000269" key="5">
    <source>
    </source>
</evidence>
<evidence type="ECO:0000303" key="6">
    <source>
    </source>
</evidence>
<evidence type="ECO:0000303" key="7">
    <source>
    </source>
</evidence>
<evidence type="ECO:0000305" key="8"/>
<evidence type="ECO:0000305" key="9">
    <source>
    </source>
</evidence>
<evidence type="ECO:0000312" key="10">
    <source>
        <dbReference type="Araport" id="AT2G04530"/>
    </source>
</evidence>
<evidence type="ECO:0000312" key="11">
    <source>
        <dbReference type="EMBL" id="AAD25827.1"/>
    </source>
</evidence>
<feature type="transit peptide" description="Chloroplast" evidence="2">
    <location>
        <begin position="1"/>
        <end position="68"/>
    </location>
</feature>
<feature type="chain" id="PRO_0000030991" description="tRNase Z TRZ2, chloroplastic">
    <location>
        <begin position="69"/>
        <end position="354"/>
    </location>
</feature>
<feature type="region of interest" description="Disordered" evidence="3">
    <location>
        <begin position="1"/>
        <end position="21"/>
    </location>
</feature>
<feature type="sequence conflict" description="In Ref. 1; CAD22099." evidence="8" ref="1">
    <original>G</original>
    <variation>V</variation>
    <location>
        <position position="107"/>
    </location>
</feature>
<feature type="sequence conflict" description="In Ref. 1; CAD22099." evidence="8" ref="1">
    <original>K</original>
    <variation>R</variation>
    <location>
        <position position="228"/>
    </location>
</feature>
<feature type="sequence conflict" description="In Ref. 1; CAD22099." evidence="8" ref="1">
    <original>K</original>
    <variation>R</variation>
    <location>
        <position position="232"/>
    </location>
</feature>
<feature type="sequence conflict" description="In Ref. 1; CAD22099." evidence="8" ref="1">
    <original>DT</original>
    <variation>YA</variation>
    <location>
        <begin position="242"/>
        <end position="243"/>
    </location>
</feature>
<feature type="sequence conflict" description="In Ref. 1; CAD22099." evidence="8" ref="1">
    <original>D</original>
    <variation>N</variation>
    <location>
        <position position="254"/>
    </location>
</feature>
<feature type="sequence conflict" description="In Ref. 1; CAD22099." evidence="8" ref="1">
    <original>D</original>
    <variation>N</variation>
    <location>
        <position position="262"/>
    </location>
</feature>
<feature type="sequence conflict" description="In Ref. 1; CAD22099." evidence="8" ref="1">
    <original>D</original>
    <variation>N</variation>
    <location>
        <position position="267"/>
    </location>
</feature>
<feature type="sequence conflict" description="In Ref. 1; CAD22099." evidence="8" ref="1">
    <original>T</original>
    <variation>S</variation>
    <location>
        <position position="276"/>
    </location>
</feature>
<protein>
    <recommendedName>
        <fullName evidence="7">tRNase Z TRZ2, chloroplastic</fullName>
        <ecNumber evidence="4">3.1.26.11</ecNumber>
    </recommendedName>
    <alternativeName>
        <fullName evidence="6">Chloroplast ribonuclease Z</fullName>
        <shortName evidence="6">Chloroplast RNase Z</shortName>
    </alternativeName>
    <alternativeName>
        <fullName evidence="7">Short tRNase Z 2</fullName>
    </alternativeName>
    <alternativeName>
        <fullName evidence="6">Zinc phosphodiesterase CPZ</fullName>
    </alternativeName>
    <alternativeName>
        <fullName>tRNA 3 endonuclease</fullName>
    </alternativeName>
    <alternativeName>
        <fullName evidence="7">tRNase ZS2</fullName>
        <shortName evidence="7">AthTRZS2</shortName>
    </alternativeName>
</protein>
<gene>
    <name evidence="7" type="primary">TRZ2</name>
    <name evidence="6" type="synonym">CPZ</name>
    <name evidence="10" type="ordered locus">At2g04530</name>
    <name evidence="11" type="ORF">T1O3.6</name>
</gene>
<reference key="1">
    <citation type="journal article" date="2002" name="EMBO J.">
        <title>Assigning a function to a conserved group of proteins: the tRNA 3' - processing enzymes.</title>
        <authorList>
            <person name="Schiffer S."/>
            <person name="Roesch S."/>
            <person name="Marchfelder A."/>
        </authorList>
    </citation>
    <scope>NUCLEOTIDE SEQUENCE [MRNA]</scope>
    <scope>FUNCTION</scope>
    <source>
        <strain>cv. Columbia</strain>
        <tissue>Leaf</tissue>
    </source>
</reference>
<reference key="2">
    <citation type="journal article" date="1999" name="Nature">
        <title>Sequence and analysis of chromosome 2 of the plant Arabidopsis thaliana.</title>
        <authorList>
            <person name="Lin X."/>
            <person name="Kaul S."/>
            <person name="Rounsley S.D."/>
            <person name="Shea T.P."/>
            <person name="Benito M.-I."/>
            <person name="Town C.D."/>
            <person name="Fujii C.Y."/>
            <person name="Mason T.M."/>
            <person name="Bowman C.L."/>
            <person name="Barnstead M.E."/>
            <person name="Feldblyum T.V."/>
            <person name="Buell C.R."/>
            <person name="Ketchum K.A."/>
            <person name="Lee J.J."/>
            <person name="Ronning C.M."/>
            <person name="Koo H.L."/>
            <person name="Moffat K.S."/>
            <person name="Cronin L.A."/>
            <person name="Shen M."/>
            <person name="Pai G."/>
            <person name="Van Aken S."/>
            <person name="Umayam L."/>
            <person name="Tallon L.J."/>
            <person name="Gill J.E."/>
            <person name="Adams M.D."/>
            <person name="Carrera A.J."/>
            <person name="Creasy T.H."/>
            <person name="Goodman H.M."/>
            <person name="Somerville C.R."/>
            <person name="Copenhaver G.P."/>
            <person name="Preuss D."/>
            <person name="Nierman W.C."/>
            <person name="White O."/>
            <person name="Eisen J.A."/>
            <person name="Salzberg S.L."/>
            <person name="Fraser C.M."/>
            <person name="Venter J.C."/>
        </authorList>
    </citation>
    <scope>NUCLEOTIDE SEQUENCE [LARGE SCALE GENOMIC DNA]</scope>
    <source>
        <strain>cv. Columbia</strain>
    </source>
</reference>
<reference key="3">
    <citation type="journal article" date="2017" name="Plant J.">
        <title>Araport11: a complete reannotation of the Arabidopsis thaliana reference genome.</title>
        <authorList>
            <person name="Cheng C.Y."/>
            <person name="Krishnakumar V."/>
            <person name="Chan A.P."/>
            <person name="Thibaud-Nissen F."/>
            <person name="Schobel S."/>
            <person name="Town C.D."/>
        </authorList>
    </citation>
    <scope>GENOME REANNOTATION</scope>
    <source>
        <strain>cv. Columbia</strain>
    </source>
</reference>
<reference key="4">
    <citation type="journal article" date="2003" name="Science">
        <title>Empirical analysis of transcriptional activity in the Arabidopsis genome.</title>
        <authorList>
            <person name="Yamada K."/>
            <person name="Lim J."/>
            <person name="Dale J.M."/>
            <person name="Chen H."/>
            <person name="Shinn P."/>
            <person name="Palm C.J."/>
            <person name="Southwick A.M."/>
            <person name="Wu H.C."/>
            <person name="Kim C.J."/>
            <person name="Nguyen M."/>
            <person name="Pham P.K."/>
            <person name="Cheuk R.F."/>
            <person name="Karlin-Newmann G."/>
            <person name="Liu S.X."/>
            <person name="Lam B."/>
            <person name="Sakano H."/>
            <person name="Wu T."/>
            <person name="Yu G."/>
            <person name="Miranda M."/>
            <person name="Quach H.L."/>
            <person name="Tripp M."/>
            <person name="Chang C.H."/>
            <person name="Lee J.M."/>
            <person name="Toriumi M.J."/>
            <person name="Chan M.M."/>
            <person name="Tang C.C."/>
            <person name="Onodera C.S."/>
            <person name="Deng J.M."/>
            <person name="Akiyama K."/>
            <person name="Ansari Y."/>
            <person name="Arakawa T."/>
            <person name="Banh J."/>
            <person name="Banno F."/>
            <person name="Bowser L."/>
            <person name="Brooks S.Y."/>
            <person name="Carninci P."/>
            <person name="Chao Q."/>
            <person name="Choy N."/>
            <person name="Enju A."/>
            <person name="Goldsmith A.D."/>
            <person name="Gurjal M."/>
            <person name="Hansen N.F."/>
            <person name="Hayashizaki Y."/>
            <person name="Johnson-Hopson C."/>
            <person name="Hsuan V.W."/>
            <person name="Iida K."/>
            <person name="Karnes M."/>
            <person name="Khan S."/>
            <person name="Koesema E."/>
            <person name="Ishida J."/>
            <person name="Jiang P.X."/>
            <person name="Jones T."/>
            <person name="Kawai J."/>
            <person name="Kamiya A."/>
            <person name="Meyers C."/>
            <person name="Nakajima M."/>
            <person name="Narusaka M."/>
            <person name="Seki M."/>
            <person name="Sakurai T."/>
            <person name="Satou M."/>
            <person name="Tamse R."/>
            <person name="Vaysberg M."/>
            <person name="Wallender E.K."/>
            <person name="Wong C."/>
            <person name="Yamamura Y."/>
            <person name="Yuan S."/>
            <person name="Shinozaki K."/>
            <person name="Davis R.W."/>
            <person name="Theologis A."/>
            <person name="Ecker J.R."/>
        </authorList>
    </citation>
    <scope>NUCLEOTIDE SEQUENCE [LARGE SCALE MRNA]</scope>
    <source>
        <strain>cv. Columbia</strain>
    </source>
</reference>
<reference key="5">
    <citation type="journal article" date="2005" name="Biol. Chem.">
        <title>The tRNase Z family of proteins: physiological functions, substrate specificity and structural properties.</title>
        <authorList>
            <person name="Vogel A."/>
            <person name="Schilling O."/>
            <person name="Spaeth B."/>
            <person name="Marchfelder A."/>
        </authorList>
    </citation>
    <scope>GENE FAMILY</scope>
    <scope>NOMENCLATURE</scope>
</reference>
<reference key="6">
    <citation type="journal article" date="2009" name="Plant Physiol.">
        <title>Arabidopsis encodes four tRNase Z enzymes.</title>
        <authorList>
            <person name="Canino G."/>
            <person name="Bocian E."/>
            <person name="Barbezier N."/>
            <person name="Echeverria M."/>
            <person name="Forner J."/>
            <person name="Binder S."/>
            <person name="Marchfelder A."/>
        </authorList>
    </citation>
    <scope>FUNCTION</scope>
    <scope>SUBCELLULAR LOCATION</scope>
    <scope>DISRUPTION PHENOTYPE</scope>
</reference>
<proteinExistence type="evidence at transcript level"/>